<reference key="1">
    <citation type="journal article" date="2003" name="J. Bacteriol.">
        <title>Complete genome sequence of the oral pathogenic bacterium Porphyromonas gingivalis strain W83.</title>
        <authorList>
            <person name="Nelson K.E."/>
            <person name="Fleischmann R.D."/>
            <person name="DeBoy R.T."/>
            <person name="Paulsen I.T."/>
            <person name="Fouts D.E."/>
            <person name="Eisen J.A."/>
            <person name="Daugherty S.C."/>
            <person name="Dodson R.J."/>
            <person name="Durkin A.S."/>
            <person name="Gwinn M.L."/>
            <person name="Haft D.H."/>
            <person name="Kolonay J.F."/>
            <person name="Nelson W.C."/>
            <person name="Mason T.M."/>
            <person name="Tallon L."/>
            <person name="Gray J."/>
            <person name="Granger D."/>
            <person name="Tettelin H."/>
            <person name="Dong H."/>
            <person name="Galvin J.L."/>
            <person name="Duncan M.J."/>
            <person name="Dewhirst F.E."/>
            <person name="Fraser C.M."/>
        </authorList>
    </citation>
    <scope>NUCLEOTIDE SEQUENCE [LARGE SCALE GENOMIC DNA]</scope>
    <source>
        <strain>ATCC BAA-308 / W83</strain>
    </source>
</reference>
<reference key="2">
    <citation type="journal article" date="2005" name="J. Biol. Chem.">
        <title>A novel Porphyromonas gingivalis FeoB plays a role in manganese accumulation.</title>
        <authorList>
            <person name="Dashper S.G."/>
            <person name="Butler C.A."/>
            <person name="Lissel J.P."/>
            <person name="Paolini R.A."/>
            <person name="Hoffmann B."/>
            <person name="Veith P.D."/>
            <person name="O'Brien-Simpson N.M."/>
            <person name="Snelgrove S.L."/>
            <person name="Tsiros J.T."/>
            <person name="Reynolds E.C."/>
        </authorList>
    </citation>
    <scope>FUNCTION</scope>
    <scope>DISRUPTION PHENOTYPE</scope>
    <source>
        <strain>ATCC 53978 / W50</strain>
    </source>
</reference>
<accession>Q7MV19</accession>
<gene>
    <name evidence="6" type="primary">feoB1</name>
    <name evidence="5" type="synonym">feoB-2</name>
    <name type="ordered locus">PG_1294</name>
</gene>
<protein>
    <recommendedName>
        <fullName evidence="7">Fe(2+) transport protein A/Fe(2+) transporter FeoB fusion protein</fullName>
    </recommendedName>
    <alternativeName>
        <fullName>Ferrous iron transport protein B</fullName>
    </alternativeName>
</protein>
<feature type="chain" id="PRO_0000210839" description="Fe(2+) transport protein A/Fe(2+) transporter FeoB fusion protein">
    <location>
        <begin position="1"/>
        <end position="844"/>
    </location>
</feature>
<feature type="transmembrane region" description="Helical" evidence="1">
    <location>
        <begin position="418"/>
        <end position="438"/>
    </location>
</feature>
<feature type="transmembrane region" description="Helical" evidence="1">
    <location>
        <begin position="475"/>
        <end position="495"/>
    </location>
</feature>
<feature type="transmembrane region" description="Helical" evidence="1">
    <location>
        <begin position="520"/>
        <end position="540"/>
    </location>
</feature>
<feature type="transmembrane region" description="Helical" evidence="1">
    <location>
        <begin position="559"/>
        <end position="579"/>
    </location>
</feature>
<feature type="transmembrane region" description="Helical" evidence="1">
    <location>
        <begin position="581"/>
        <end position="601"/>
    </location>
</feature>
<feature type="transmembrane region" description="Helical" evidence="1">
    <location>
        <begin position="646"/>
        <end position="666"/>
    </location>
</feature>
<feature type="transmembrane region" description="Helical" evidence="1">
    <location>
        <begin position="786"/>
        <end position="806"/>
    </location>
</feature>
<feature type="transmembrane region" description="Helical" evidence="1">
    <location>
        <begin position="817"/>
        <end position="837"/>
    </location>
</feature>
<feature type="domain" description="FeoB-type G" evidence="2">
    <location>
        <begin position="126"/>
        <end position="289"/>
    </location>
</feature>
<feature type="region of interest" description="FeoA">
    <location>
        <begin position="1"/>
        <end position="73"/>
    </location>
</feature>
<feature type="region of interest" description="FeoB">
    <location>
        <begin position="74"/>
        <end position="844"/>
    </location>
</feature>
<feature type="region of interest" description="Disordered" evidence="3">
    <location>
        <begin position="79"/>
        <end position="110"/>
    </location>
</feature>
<feature type="compositionally biased region" description="Polar residues" evidence="3">
    <location>
        <begin position="79"/>
        <end position="106"/>
    </location>
</feature>
<feature type="binding site" evidence="2">
    <location>
        <begin position="133"/>
        <end position="140"/>
    </location>
    <ligand>
        <name>GTP</name>
        <dbReference type="ChEBI" id="CHEBI:37565"/>
        <label>1</label>
    </ligand>
</feature>
<feature type="binding site" evidence="2">
    <location>
        <begin position="158"/>
        <end position="162"/>
    </location>
    <ligand>
        <name>GTP</name>
        <dbReference type="ChEBI" id="CHEBI:37565"/>
        <label>2</label>
    </ligand>
</feature>
<feature type="binding site" evidence="2">
    <location>
        <begin position="179"/>
        <end position="182"/>
    </location>
    <ligand>
        <name>GTP</name>
        <dbReference type="ChEBI" id="CHEBI:37565"/>
        <label>3</label>
    </ligand>
</feature>
<feature type="binding site" evidence="2">
    <location>
        <begin position="240"/>
        <end position="243"/>
    </location>
    <ligand>
        <name>GTP</name>
        <dbReference type="ChEBI" id="CHEBI:37565"/>
    </ligand>
</feature>
<feature type="binding site" evidence="2">
    <location>
        <begin position="269"/>
        <end position="271"/>
    </location>
    <ligand>
        <name>GTP</name>
        <dbReference type="ChEBI" id="CHEBI:37565"/>
    </ligand>
</feature>
<organism>
    <name type="scientific">Porphyromonas gingivalis (strain ATCC BAA-308 / W83)</name>
    <dbReference type="NCBI Taxonomy" id="242619"/>
    <lineage>
        <taxon>Bacteria</taxon>
        <taxon>Pseudomonadati</taxon>
        <taxon>Bacteroidota</taxon>
        <taxon>Bacteroidia</taxon>
        <taxon>Bacteroidales</taxon>
        <taxon>Porphyromonadaceae</taxon>
        <taxon>Porphyromonas</taxon>
    </lineage>
</organism>
<name>FEOAB_PORGI</name>
<dbReference type="EMBL" id="AE015924">
    <property type="protein sequence ID" value="AAQ66370.1"/>
    <property type="molecule type" value="Genomic_DNA"/>
</dbReference>
<dbReference type="RefSeq" id="WP_010956271.1">
    <property type="nucleotide sequence ID" value="NC_002950.2"/>
</dbReference>
<dbReference type="SMR" id="Q7MV19"/>
<dbReference type="STRING" id="242619.PG_1294"/>
<dbReference type="TCDB" id="9.A.8.1.6">
    <property type="family name" value="the ferrous iron uptake (feob) family"/>
</dbReference>
<dbReference type="EnsemblBacteria" id="AAQ66370">
    <property type="protein sequence ID" value="AAQ66370"/>
    <property type="gene ID" value="PG_1294"/>
</dbReference>
<dbReference type="KEGG" id="pgi:PG_1294"/>
<dbReference type="PATRIC" id="fig|242619.8.peg.1196"/>
<dbReference type="eggNOG" id="COG0370">
    <property type="taxonomic scope" value="Bacteria"/>
</dbReference>
<dbReference type="eggNOG" id="COG1918">
    <property type="taxonomic scope" value="Bacteria"/>
</dbReference>
<dbReference type="HOGENOM" id="CLU_013350_3_0_10"/>
<dbReference type="BioCyc" id="PGIN242619:G1G02-1201-MONOMER"/>
<dbReference type="Proteomes" id="UP000000588">
    <property type="component" value="Chromosome"/>
</dbReference>
<dbReference type="GO" id="GO:0005886">
    <property type="term" value="C:plasma membrane"/>
    <property type="evidence" value="ECO:0007669"/>
    <property type="project" value="UniProtKB-SubCell"/>
</dbReference>
<dbReference type="GO" id="GO:0015093">
    <property type="term" value="F:ferrous iron transmembrane transporter activity"/>
    <property type="evidence" value="ECO:0007669"/>
    <property type="project" value="InterPro"/>
</dbReference>
<dbReference type="GO" id="GO:0005525">
    <property type="term" value="F:GTP binding"/>
    <property type="evidence" value="ECO:0007669"/>
    <property type="project" value="UniProtKB-KW"/>
</dbReference>
<dbReference type="GO" id="GO:0046914">
    <property type="term" value="F:transition metal ion binding"/>
    <property type="evidence" value="ECO:0007669"/>
    <property type="project" value="InterPro"/>
</dbReference>
<dbReference type="CDD" id="cd01879">
    <property type="entry name" value="FeoB"/>
    <property type="match status" value="1"/>
</dbReference>
<dbReference type="Gene3D" id="1.10.287.1770">
    <property type="match status" value="1"/>
</dbReference>
<dbReference type="Gene3D" id="2.30.30.90">
    <property type="match status" value="1"/>
</dbReference>
<dbReference type="Gene3D" id="3.40.50.300">
    <property type="entry name" value="P-loop containing nucleotide triphosphate hydrolases"/>
    <property type="match status" value="1"/>
</dbReference>
<dbReference type="InterPro" id="IPR007167">
    <property type="entry name" value="Fe-transptr_FeoA-like"/>
</dbReference>
<dbReference type="InterPro" id="IPR003373">
    <property type="entry name" value="Fe2_transport_prot-B"/>
</dbReference>
<dbReference type="InterPro" id="IPR011640">
    <property type="entry name" value="Fe2_transport_prot_B_C"/>
</dbReference>
<dbReference type="InterPro" id="IPR038157">
    <property type="entry name" value="FeoA_core_dom"/>
</dbReference>
<dbReference type="InterPro" id="IPR041069">
    <property type="entry name" value="FeoB_Cyto"/>
</dbReference>
<dbReference type="InterPro" id="IPR050860">
    <property type="entry name" value="FeoB_GTPase"/>
</dbReference>
<dbReference type="InterPro" id="IPR030389">
    <property type="entry name" value="G_FEOB_dom"/>
</dbReference>
<dbReference type="InterPro" id="IPR011642">
    <property type="entry name" value="Gate_dom"/>
</dbReference>
<dbReference type="InterPro" id="IPR006073">
    <property type="entry name" value="GTP-bd"/>
</dbReference>
<dbReference type="InterPro" id="IPR027417">
    <property type="entry name" value="P-loop_NTPase"/>
</dbReference>
<dbReference type="InterPro" id="IPR005225">
    <property type="entry name" value="Small_GTP-bd"/>
</dbReference>
<dbReference type="InterPro" id="IPR008988">
    <property type="entry name" value="Transcriptional_repressor_C"/>
</dbReference>
<dbReference type="NCBIfam" id="TIGR00437">
    <property type="entry name" value="feoB"/>
    <property type="match status" value="1"/>
</dbReference>
<dbReference type="NCBIfam" id="TIGR00231">
    <property type="entry name" value="small_GTP"/>
    <property type="match status" value="1"/>
</dbReference>
<dbReference type="PANTHER" id="PTHR43185:SF1">
    <property type="entry name" value="FE(2+) TRANSPORTER FEOB"/>
    <property type="match status" value="1"/>
</dbReference>
<dbReference type="PANTHER" id="PTHR43185">
    <property type="entry name" value="FERROUS IRON TRANSPORT PROTEIN B"/>
    <property type="match status" value="1"/>
</dbReference>
<dbReference type="Pfam" id="PF04023">
    <property type="entry name" value="FeoA"/>
    <property type="match status" value="1"/>
</dbReference>
<dbReference type="Pfam" id="PF07664">
    <property type="entry name" value="FeoB_C"/>
    <property type="match status" value="1"/>
</dbReference>
<dbReference type="Pfam" id="PF17910">
    <property type="entry name" value="FeoB_Cyto"/>
    <property type="match status" value="1"/>
</dbReference>
<dbReference type="Pfam" id="PF02421">
    <property type="entry name" value="FeoB_N"/>
    <property type="match status" value="1"/>
</dbReference>
<dbReference type="Pfam" id="PF07670">
    <property type="entry name" value="Gate"/>
    <property type="match status" value="2"/>
</dbReference>
<dbReference type="PRINTS" id="PR00326">
    <property type="entry name" value="GTP1OBG"/>
</dbReference>
<dbReference type="SMART" id="SM00899">
    <property type="entry name" value="FeoA"/>
    <property type="match status" value="1"/>
</dbReference>
<dbReference type="SUPFAM" id="SSF50037">
    <property type="entry name" value="C-terminal domain of transcriptional repressors"/>
    <property type="match status" value="1"/>
</dbReference>
<dbReference type="SUPFAM" id="SSF52540">
    <property type="entry name" value="P-loop containing nucleoside triphosphate hydrolases"/>
    <property type="match status" value="1"/>
</dbReference>
<dbReference type="PROSITE" id="PS51711">
    <property type="entry name" value="G_FEOB"/>
    <property type="match status" value="1"/>
</dbReference>
<keyword id="KW-0997">Cell inner membrane</keyword>
<keyword id="KW-1003">Cell membrane</keyword>
<keyword id="KW-0342">GTP-binding</keyword>
<keyword id="KW-0406">Ion transport</keyword>
<keyword id="KW-0408">Iron</keyword>
<keyword id="KW-0410">Iron transport</keyword>
<keyword id="KW-0472">Membrane</keyword>
<keyword id="KW-0547">Nucleotide-binding</keyword>
<keyword id="KW-1185">Reference proteome</keyword>
<keyword id="KW-0812">Transmembrane</keyword>
<keyword id="KW-1133">Transmembrane helix</keyword>
<keyword id="KW-0813">Transport</keyword>
<sequence length="844" mass="94623">MRLSELHTGDQAVIVRVEGRGVFRKRILEMGFVHGKTITVVQCAPLRDPVYYRIMDYNVSLRREDAAKIEVELISSNATSSPASNDIGEQSANPDSNESIPTNPTEDISAKTKSEIEIEVKPNGHVIRVALIGNPNCGKTSIFNRASGAHEHVGNYSGVTVEAKEGLFRHGDYKIEIIDLPGTYSLSPYSPEELYIRQYLSEETRPDLVLNVVDTCNLERNLYLTLQLKEMGLPVVIALNMFDEFEKKGDTFDYPALSAMLGIPMVPTVGRTGQGLPELFDTLISIHEGRNKIIRPIRINYGSIIEPAVEALTEKINNQLSLPYSLPARYIAVKLLEGDKEMNRFVGEQPKGLFILSARDFALREIDEHLTVARDAESIITDQRYGFIAGALKETYRSSYKQLKTLTDKIDHIVTHRVLGFPLFLLFMFIMFEATFVLGRYPMDWIEAGVGWIGSMVNTFMPDGSFKDLIVDGVIGGVGGVIVFLPNILILYFFISLMEDSGYMARAAFIMDKIMHRMGLHGKSFIPLIMGFGCNVPAIMATRTIESKQSRMITMLVTPLMSCSARLPVYLLLAGAFFPDSAGLVLFGLYFLGILLAVLLARLFKKTLFKVEDVPFVMELPPYRMPTSRSVIVHMWNKAAQYLRKMGSIILLASIVIWFLSYYPRYSEEAVLISQIEQIEGNPQLDEEKKTSQIEELNRKAHIEQQEQSYIGRFGKAVQPVLAPIGFDWKMSVSLLTGMAAKEVVVSTLGVIYTGDSDDSDEAARRLGERIREDRDAEGNHTFSPIIALALMAFVLIYFPCIATVVAIGRESGHWKWAVFSIIYSCSLAWIVSFLIYRIGILFF</sequence>
<proteinExistence type="inferred from homology"/>
<comment type="function">
    <text evidence="4">Probable transporter of a GTP-driven Fe(2+) uptake system.</text>
</comment>
<comment type="subcellular location">
    <subcellularLocation>
        <location evidence="7">Cell inner membrane</location>
        <topology evidence="1">Multi-pass membrane protein</topology>
    </subcellularLocation>
</comment>
<comment type="disruption phenotype">
    <text evidence="4">Cells do not transport Fe(2+). Cells are avirulent and therefore unable to cause lesions in mice.</text>
</comment>
<comment type="similarity">
    <text evidence="7">In the N-terminal section; belongs to the FeoA family.</text>
</comment>
<comment type="similarity">
    <text evidence="2">In the C-terminal section; belongs to the TRAFAC class TrmE-Era-EngA-EngB-Septin-like GTPase superfamily. FeoB GTPase (TC 9.A.8) family.</text>
</comment>
<evidence type="ECO:0000255" key="1"/>
<evidence type="ECO:0000255" key="2">
    <source>
        <dbReference type="PROSITE-ProRule" id="PRU01048"/>
    </source>
</evidence>
<evidence type="ECO:0000256" key="3">
    <source>
        <dbReference type="SAM" id="MobiDB-lite"/>
    </source>
</evidence>
<evidence type="ECO:0000269" key="4">
    <source>
    </source>
</evidence>
<evidence type="ECO:0000303" key="5">
    <source>
    </source>
</evidence>
<evidence type="ECO:0000303" key="6">
    <source>
    </source>
</evidence>
<evidence type="ECO:0000305" key="7"/>